<reference key="1">
    <citation type="journal article" date="2001" name="Plant Physiol.">
        <title>Differential expression of members of the annexin multigene family in Arabidopsis.</title>
        <authorList>
            <person name="Clark G.B."/>
            <person name="Sessions A."/>
            <person name="Eastburn D.J."/>
            <person name="Roux S.J."/>
        </authorList>
    </citation>
    <scope>NUCLEOTIDE SEQUENCE [MRNA]</scope>
    <scope>TISSUE SPECIFICITY</scope>
</reference>
<reference key="2">
    <citation type="journal article" date="2000" name="Nature">
        <title>Sequence and analysis of chromosome 5 of the plant Arabidopsis thaliana.</title>
        <authorList>
            <person name="Tabata S."/>
            <person name="Kaneko T."/>
            <person name="Nakamura Y."/>
            <person name="Kotani H."/>
            <person name="Kato T."/>
            <person name="Asamizu E."/>
            <person name="Miyajima N."/>
            <person name="Sasamoto S."/>
            <person name="Kimura T."/>
            <person name="Hosouchi T."/>
            <person name="Kawashima K."/>
            <person name="Kohara M."/>
            <person name="Matsumoto M."/>
            <person name="Matsuno A."/>
            <person name="Muraki A."/>
            <person name="Nakayama S."/>
            <person name="Nakazaki N."/>
            <person name="Naruo K."/>
            <person name="Okumura S."/>
            <person name="Shinpo S."/>
            <person name="Takeuchi C."/>
            <person name="Wada T."/>
            <person name="Watanabe A."/>
            <person name="Yamada M."/>
            <person name="Yasuda M."/>
            <person name="Sato S."/>
            <person name="de la Bastide M."/>
            <person name="Huang E."/>
            <person name="Spiegel L."/>
            <person name="Gnoj L."/>
            <person name="O'Shaughnessy A."/>
            <person name="Preston R."/>
            <person name="Habermann K."/>
            <person name="Murray J."/>
            <person name="Johnson D."/>
            <person name="Rohlfing T."/>
            <person name="Nelson J."/>
            <person name="Stoneking T."/>
            <person name="Pepin K."/>
            <person name="Spieth J."/>
            <person name="Sekhon M."/>
            <person name="Armstrong J."/>
            <person name="Becker M."/>
            <person name="Belter E."/>
            <person name="Cordum H."/>
            <person name="Cordes M."/>
            <person name="Courtney L."/>
            <person name="Courtney W."/>
            <person name="Dante M."/>
            <person name="Du H."/>
            <person name="Edwards J."/>
            <person name="Fryman J."/>
            <person name="Haakensen B."/>
            <person name="Lamar E."/>
            <person name="Latreille P."/>
            <person name="Leonard S."/>
            <person name="Meyer R."/>
            <person name="Mulvaney E."/>
            <person name="Ozersky P."/>
            <person name="Riley A."/>
            <person name="Strowmatt C."/>
            <person name="Wagner-McPherson C."/>
            <person name="Wollam A."/>
            <person name="Yoakum M."/>
            <person name="Bell M."/>
            <person name="Dedhia N."/>
            <person name="Parnell L."/>
            <person name="Shah R."/>
            <person name="Rodriguez M."/>
            <person name="Hoon See L."/>
            <person name="Vil D."/>
            <person name="Baker J."/>
            <person name="Kirchoff K."/>
            <person name="Toth K."/>
            <person name="King L."/>
            <person name="Bahret A."/>
            <person name="Miller B."/>
            <person name="Marra M.A."/>
            <person name="Martienssen R."/>
            <person name="McCombie W.R."/>
            <person name="Wilson R.K."/>
            <person name="Murphy G."/>
            <person name="Bancroft I."/>
            <person name="Volckaert G."/>
            <person name="Wambutt R."/>
            <person name="Duesterhoeft A."/>
            <person name="Stiekema W."/>
            <person name="Pohl T."/>
            <person name="Entian K.-D."/>
            <person name="Terryn N."/>
            <person name="Hartley N."/>
            <person name="Bent E."/>
            <person name="Johnson S."/>
            <person name="Langham S.-A."/>
            <person name="McCullagh B."/>
            <person name="Robben J."/>
            <person name="Grymonprez B."/>
            <person name="Zimmermann W."/>
            <person name="Ramsperger U."/>
            <person name="Wedler H."/>
            <person name="Balke K."/>
            <person name="Wedler E."/>
            <person name="Peters S."/>
            <person name="van Staveren M."/>
            <person name="Dirkse W."/>
            <person name="Mooijman P."/>
            <person name="Klein Lankhorst R."/>
            <person name="Weitzenegger T."/>
            <person name="Bothe G."/>
            <person name="Rose M."/>
            <person name="Hauf J."/>
            <person name="Berneiser S."/>
            <person name="Hempel S."/>
            <person name="Feldpausch M."/>
            <person name="Lamberth S."/>
            <person name="Villarroel R."/>
            <person name="Gielen J."/>
            <person name="Ardiles W."/>
            <person name="Bents O."/>
            <person name="Lemcke K."/>
            <person name="Kolesov G."/>
            <person name="Mayer K.F.X."/>
            <person name="Rudd S."/>
            <person name="Schoof H."/>
            <person name="Schueller C."/>
            <person name="Zaccaria P."/>
            <person name="Mewes H.-W."/>
            <person name="Bevan M."/>
            <person name="Fransz P.F."/>
        </authorList>
    </citation>
    <scope>NUCLEOTIDE SEQUENCE [LARGE SCALE GENOMIC DNA]</scope>
    <source>
        <strain>cv. Columbia</strain>
    </source>
</reference>
<reference key="3">
    <citation type="journal article" date="2017" name="Plant J.">
        <title>Araport11: a complete reannotation of the Arabidopsis thaliana reference genome.</title>
        <authorList>
            <person name="Cheng C.Y."/>
            <person name="Krishnakumar V."/>
            <person name="Chan A.P."/>
            <person name="Thibaud-Nissen F."/>
            <person name="Schobel S."/>
            <person name="Town C.D."/>
        </authorList>
    </citation>
    <scope>GENOME REANNOTATION</scope>
    <source>
        <strain>cv. Columbia</strain>
    </source>
</reference>
<reference key="4">
    <citation type="submission" date="2004-09" db="EMBL/GenBank/DDBJ databases">
        <title>Large-scale analysis of RIKEN Arabidopsis full-length (RAFL) cDNAs.</title>
        <authorList>
            <person name="Totoki Y."/>
            <person name="Seki M."/>
            <person name="Ishida J."/>
            <person name="Nakajima M."/>
            <person name="Enju A."/>
            <person name="Kamiya A."/>
            <person name="Narusaka M."/>
            <person name="Shin-i T."/>
            <person name="Nakagawa M."/>
            <person name="Sakamoto N."/>
            <person name="Oishi K."/>
            <person name="Kohara Y."/>
            <person name="Kobayashi M."/>
            <person name="Toyoda A."/>
            <person name="Sakaki Y."/>
            <person name="Sakurai T."/>
            <person name="Iida K."/>
            <person name="Akiyama K."/>
            <person name="Satou M."/>
            <person name="Toyoda T."/>
            <person name="Konagaya A."/>
            <person name="Carninci P."/>
            <person name="Kawai J."/>
            <person name="Hayashizaki Y."/>
            <person name="Shinozaki K."/>
        </authorList>
    </citation>
    <scope>NUCLEOTIDE SEQUENCE [LARGE SCALE MRNA]</scope>
    <source>
        <strain>cv. Columbia</strain>
    </source>
</reference>
<reference key="5">
    <citation type="journal article" date="2006" name="Plant Biotechnol. J.">
        <title>Simultaneous high-throughput recombinational cloning of open reading frames in closed and open configurations.</title>
        <authorList>
            <person name="Underwood B.A."/>
            <person name="Vanderhaeghen R."/>
            <person name="Whitford R."/>
            <person name="Town C.D."/>
            <person name="Hilson P."/>
        </authorList>
    </citation>
    <scope>NUCLEOTIDE SEQUENCE [LARGE SCALE MRNA]</scope>
    <source>
        <strain>cv. Columbia</strain>
    </source>
</reference>
<reference key="6">
    <citation type="journal article" date="2006" name="Plant Physiol. Biochem.">
        <title>Expression profiling of the Arabidopsis annexin gene family during germination, de-etiolation and abiotic stress.</title>
        <authorList>
            <person name="Cantero A."/>
            <person name="Barthakur S."/>
            <person name="Bushart T.J."/>
            <person name="Chou S."/>
            <person name="Morgan R.O."/>
            <person name="Fernandez M.P."/>
            <person name="Clark G.B."/>
            <person name="Roux S.J."/>
        </authorList>
    </citation>
    <scope>INDUCTION</scope>
    <scope>GENE FAMILY</scope>
</reference>
<keyword id="KW-0007">Acetylation</keyword>
<keyword id="KW-0041">Annexin</keyword>
<keyword id="KW-0106">Calcium</keyword>
<keyword id="KW-0111">Calcium/phospholipid-binding</keyword>
<keyword id="KW-0479">Metal-binding</keyword>
<keyword id="KW-0597">Phosphoprotein</keyword>
<keyword id="KW-1185">Reference proteome</keyword>
<keyword id="KW-0677">Repeat</keyword>
<comment type="tissue specificity">
    <text evidence="5">Expressed in flowers.</text>
</comment>
<comment type="induction">
    <text evidence="6">Up-regulated by heat shock, dehydration and salt stresses.</text>
</comment>
<comment type="domain">
    <text>A pair of annexin repeats may form one binding site for calcium and phospholipid.</text>
</comment>
<comment type="similarity">
    <text evidence="7">Belongs to the annexin (TC 1.A.31.1) family.</text>
</comment>
<comment type="sequence caution" evidence="7">
    <conflict type="erroneous termination">
        <sequence resource="EMBL-CDS" id="ABK28695"/>
    </conflict>
    <text>Extended C-terminus.</text>
</comment>
<name>ANXD6_ARATH</name>
<organism>
    <name type="scientific">Arabidopsis thaliana</name>
    <name type="common">Mouse-ear cress</name>
    <dbReference type="NCBI Taxonomy" id="3702"/>
    <lineage>
        <taxon>Eukaryota</taxon>
        <taxon>Viridiplantae</taxon>
        <taxon>Streptophyta</taxon>
        <taxon>Embryophyta</taxon>
        <taxon>Tracheophyta</taxon>
        <taxon>Spermatophyta</taxon>
        <taxon>Magnoliopsida</taxon>
        <taxon>eudicotyledons</taxon>
        <taxon>Gunneridae</taxon>
        <taxon>Pentapetalae</taxon>
        <taxon>rosids</taxon>
        <taxon>malvids</taxon>
        <taxon>Brassicales</taxon>
        <taxon>Brassicaceae</taxon>
        <taxon>Camelineae</taxon>
        <taxon>Arabidopsis</taxon>
    </lineage>
</organism>
<gene>
    <name type="primary">ANN6</name>
    <name type="synonym">ANNAT6</name>
    <name type="ordered locus">At5g10220</name>
    <name type="ORF">F18D22.3</name>
    <name type="ORF">T31P16_210</name>
</gene>
<proteinExistence type="evidence at transcript level"/>
<accession>Q9LX08</accession>
<accession>A0MFF3</accession>
<accession>Q681H6</accession>
<accession>Q9C5V3</accession>
<feature type="initiator methionine" description="Removed" evidence="2">
    <location>
        <position position="1"/>
    </location>
</feature>
<feature type="chain" id="PRO_0000278820" description="Annexin D6">
    <location>
        <begin position="2"/>
        <end position="318"/>
    </location>
</feature>
<feature type="repeat" description="Annexin 1" evidence="4">
    <location>
        <begin position="11"/>
        <end position="82"/>
    </location>
</feature>
<feature type="repeat" description="Annexin 2" evidence="4">
    <location>
        <begin position="83"/>
        <end position="154"/>
    </location>
</feature>
<feature type="repeat" description="Annexin 3" evidence="4">
    <location>
        <begin position="168"/>
        <end position="239"/>
    </location>
</feature>
<feature type="repeat" description="Annexin 4" evidence="4">
    <location>
        <begin position="243"/>
        <end position="314"/>
    </location>
</feature>
<feature type="binding site" evidence="1">
    <location>
        <position position="24"/>
    </location>
    <ligand>
        <name>Ca(2+)</name>
        <dbReference type="ChEBI" id="CHEBI:29108"/>
        <label>1</label>
    </ligand>
</feature>
<feature type="binding site" evidence="1">
    <location>
        <position position="26"/>
    </location>
    <ligand>
        <name>Ca(2+)</name>
        <dbReference type="ChEBI" id="CHEBI:29108"/>
        <label>1</label>
    </ligand>
</feature>
<feature type="binding site" evidence="1">
    <location>
        <position position="28"/>
    </location>
    <ligand>
        <name>Ca(2+)</name>
        <dbReference type="ChEBI" id="CHEBI:29108"/>
        <label>1</label>
    </ligand>
</feature>
<feature type="binding site" evidence="1">
    <location>
        <position position="68"/>
    </location>
    <ligand>
        <name>Ca(2+)</name>
        <dbReference type="ChEBI" id="CHEBI:29108"/>
        <label>1</label>
    </ligand>
</feature>
<feature type="binding site" evidence="1">
    <location>
        <position position="256"/>
    </location>
    <ligand>
        <name>Ca(2+)</name>
        <dbReference type="ChEBI" id="CHEBI:29108"/>
        <label>2</label>
    </ligand>
</feature>
<feature type="binding site" evidence="1">
    <location>
        <position position="258"/>
    </location>
    <ligand>
        <name>Ca(2+)</name>
        <dbReference type="ChEBI" id="CHEBI:29108"/>
        <label>2</label>
    </ligand>
</feature>
<feature type="binding site" evidence="1">
    <location>
        <position position="260"/>
    </location>
    <ligand>
        <name>Ca(2+)</name>
        <dbReference type="ChEBI" id="CHEBI:29108"/>
        <label>2</label>
    </ligand>
</feature>
<feature type="binding site" evidence="1">
    <location>
        <position position="300"/>
    </location>
    <ligand>
        <name>Ca(2+)</name>
        <dbReference type="ChEBI" id="CHEBI:29108"/>
        <label>2</label>
    </ligand>
</feature>
<feature type="binding site" evidence="1">
    <location>
        <position position="301"/>
    </location>
    <ligand>
        <name>Ca(2+)</name>
        <dbReference type="ChEBI" id="CHEBI:29108"/>
        <label>3</label>
    </ligand>
</feature>
<feature type="modified residue" description="N-acetylalanine" evidence="2">
    <location>
        <position position="2"/>
    </location>
</feature>
<feature type="modified residue" description="Phosphoserine" evidence="3">
    <location>
        <position position="95"/>
    </location>
</feature>
<feature type="modified residue" description="Phosphothreonine" evidence="3">
    <location>
        <position position="100"/>
    </location>
</feature>
<feature type="modified residue" description="Phosphothreonine" evidence="2">
    <location>
        <position position="112"/>
    </location>
</feature>
<feature type="modified residue" description="Phosphotyrosine" evidence="3">
    <location>
        <position position="129"/>
    </location>
</feature>
<feature type="modified residue" description="Phosphotyrosine" evidence="2">
    <location>
        <position position="285"/>
    </location>
</feature>
<feature type="modified residue" description="Phosphoserine" evidence="2">
    <location>
        <position position="290"/>
    </location>
</feature>
<feature type="sequence conflict" description="In Ref. 4; BAD43335/BAD43655/BAD43404." evidence="7" ref="4">
    <original>M</original>
    <variation>I</variation>
    <location>
        <position position="33"/>
    </location>
</feature>
<feature type="sequence conflict" description="In Ref. 1; AAG61155." evidence="7" ref="1">
    <original>L</original>
    <variation>S</variation>
    <location>
        <position position="91"/>
    </location>
</feature>
<feature type="sequence conflict" description="In Ref. 1; AAG61155." evidence="7" ref="1">
    <original>L</original>
    <variation>M</variation>
    <location>
        <position position="98"/>
    </location>
</feature>
<feature type="sequence conflict" description="In Ref. 1; AAG61155." evidence="7" ref="1">
    <original>F</original>
    <variation>L</variation>
    <location>
        <position position="210"/>
    </location>
</feature>
<dbReference type="EMBL" id="AY014798">
    <property type="protein sequence ID" value="AAG61155.1"/>
    <property type="molecule type" value="mRNA"/>
</dbReference>
<dbReference type="EMBL" id="AL356332">
    <property type="protein sequence ID" value="CAB92063.1"/>
    <property type="molecule type" value="Genomic_DNA"/>
</dbReference>
<dbReference type="EMBL" id="CP002688">
    <property type="protein sequence ID" value="AED91509.1"/>
    <property type="molecule type" value="Genomic_DNA"/>
</dbReference>
<dbReference type="EMBL" id="AK175641">
    <property type="protein sequence ID" value="BAD43404.1"/>
    <property type="molecule type" value="mRNA"/>
</dbReference>
<dbReference type="EMBL" id="AK175892">
    <property type="protein sequence ID" value="BAD43655.1"/>
    <property type="molecule type" value="mRNA"/>
</dbReference>
<dbReference type="EMBL" id="AK175572">
    <property type="protein sequence ID" value="BAD43335.1"/>
    <property type="molecule type" value="mRNA"/>
</dbReference>
<dbReference type="EMBL" id="DQ446938">
    <property type="protein sequence ID" value="ABE66149.1"/>
    <property type="molecule type" value="mRNA"/>
</dbReference>
<dbReference type="EMBL" id="DQ653279">
    <property type="protein sequence ID" value="ABK28695.1"/>
    <property type="status" value="ALT_SEQ"/>
    <property type="molecule type" value="mRNA"/>
</dbReference>
<dbReference type="PIR" id="T50026">
    <property type="entry name" value="T50026"/>
</dbReference>
<dbReference type="RefSeq" id="NP_196584.1">
    <property type="nucleotide sequence ID" value="NM_121060.4"/>
</dbReference>
<dbReference type="SMR" id="Q9LX08"/>
<dbReference type="BioGRID" id="16164">
    <property type="interactions" value="3"/>
</dbReference>
<dbReference type="FunCoup" id="Q9LX08">
    <property type="interactions" value="211"/>
</dbReference>
<dbReference type="IntAct" id="Q9LX08">
    <property type="interactions" value="1"/>
</dbReference>
<dbReference type="PaxDb" id="3702-AT5G10220.1"/>
<dbReference type="ProteomicsDB" id="244435"/>
<dbReference type="EnsemblPlants" id="AT5G10220.1">
    <property type="protein sequence ID" value="AT5G10220.1"/>
    <property type="gene ID" value="AT5G10220"/>
</dbReference>
<dbReference type="GeneID" id="830886"/>
<dbReference type="Gramene" id="AT5G10220.1">
    <property type="protein sequence ID" value="AT5G10220.1"/>
    <property type="gene ID" value="AT5G10220"/>
</dbReference>
<dbReference type="KEGG" id="ath:AT5G10220"/>
<dbReference type="Araport" id="AT5G10220"/>
<dbReference type="TAIR" id="AT5G10220">
    <property type="gene designation" value="ANN6"/>
</dbReference>
<dbReference type="eggNOG" id="KOG0819">
    <property type="taxonomic scope" value="Eukaryota"/>
</dbReference>
<dbReference type="HOGENOM" id="CLU_025300_0_1_1"/>
<dbReference type="InParanoid" id="Q9LX08"/>
<dbReference type="PhylomeDB" id="Q9LX08"/>
<dbReference type="PRO" id="PR:Q9LX08"/>
<dbReference type="Proteomes" id="UP000006548">
    <property type="component" value="Chromosome 5"/>
</dbReference>
<dbReference type="ExpressionAtlas" id="Q9LX08">
    <property type="expression patterns" value="baseline and differential"/>
</dbReference>
<dbReference type="GO" id="GO:0005509">
    <property type="term" value="F:calcium ion binding"/>
    <property type="evidence" value="ECO:0000250"/>
    <property type="project" value="UniProtKB"/>
</dbReference>
<dbReference type="GO" id="GO:0005544">
    <property type="term" value="F:calcium-dependent phospholipid binding"/>
    <property type="evidence" value="ECO:0007669"/>
    <property type="project" value="UniProtKB-KW"/>
</dbReference>
<dbReference type="GO" id="GO:0009409">
    <property type="term" value="P:response to cold"/>
    <property type="evidence" value="ECO:0000270"/>
    <property type="project" value="TAIR"/>
</dbReference>
<dbReference type="GO" id="GO:0009408">
    <property type="term" value="P:response to heat"/>
    <property type="evidence" value="ECO:0000270"/>
    <property type="project" value="TAIR"/>
</dbReference>
<dbReference type="GO" id="GO:0009639">
    <property type="term" value="P:response to red or far red light"/>
    <property type="evidence" value="ECO:0000270"/>
    <property type="project" value="TAIR"/>
</dbReference>
<dbReference type="GO" id="GO:0009651">
    <property type="term" value="P:response to salt stress"/>
    <property type="evidence" value="ECO:0000270"/>
    <property type="project" value="TAIR"/>
</dbReference>
<dbReference type="GO" id="GO:0009414">
    <property type="term" value="P:response to water deprivation"/>
    <property type="evidence" value="ECO:0000270"/>
    <property type="project" value="TAIR"/>
</dbReference>
<dbReference type="FunFam" id="1.10.220.10:FF:000001">
    <property type="entry name" value="Annexin"/>
    <property type="match status" value="1"/>
</dbReference>
<dbReference type="FunFam" id="1.10.220.10:FF:000006">
    <property type="entry name" value="Annexin"/>
    <property type="match status" value="1"/>
</dbReference>
<dbReference type="FunFam" id="1.10.220.10:FF:000008">
    <property type="entry name" value="Annexin"/>
    <property type="match status" value="1"/>
</dbReference>
<dbReference type="FunFam" id="1.10.220.10:FF:000009">
    <property type="entry name" value="Annexin"/>
    <property type="match status" value="1"/>
</dbReference>
<dbReference type="Gene3D" id="1.10.220.10">
    <property type="entry name" value="Annexin"/>
    <property type="match status" value="4"/>
</dbReference>
<dbReference type="InterPro" id="IPR001464">
    <property type="entry name" value="Annexin"/>
</dbReference>
<dbReference type="InterPro" id="IPR018502">
    <property type="entry name" value="Annexin_repeat"/>
</dbReference>
<dbReference type="InterPro" id="IPR018252">
    <property type="entry name" value="Annexin_repeat_CS"/>
</dbReference>
<dbReference type="InterPro" id="IPR037104">
    <property type="entry name" value="Annexin_sf"/>
</dbReference>
<dbReference type="InterPro" id="IPR009118">
    <property type="entry name" value="AnnexinD_plant"/>
</dbReference>
<dbReference type="PANTHER" id="PTHR10502">
    <property type="entry name" value="ANNEXIN"/>
    <property type="match status" value="1"/>
</dbReference>
<dbReference type="PANTHER" id="PTHR10502:SF202">
    <property type="entry name" value="ANNEXIN D6"/>
    <property type="match status" value="1"/>
</dbReference>
<dbReference type="Pfam" id="PF00191">
    <property type="entry name" value="Annexin"/>
    <property type="match status" value="4"/>
</dbReference>
<dbReference type="PRINTS" id="PR00196">
    <property type="entry name" value="ANNEXIN"/>
</dbReference>
<dbReference type="PRINTS" id="PR01814">
    <property type="entry name" value="ANNEXINPLANT"/>
</dbReference>
<dbReference type="SMART" id="SM00335">
    <property type="entry name" value="ANX"/>
    <property type="match status" value="4"/>
</dbReference>
<dbReference type="SUPFAM" id="SSF47874">
    <property type="entry name" value="Annexin"/>
    <property type="match status" value="1"/>
</dbReference>
<dbReference type="PROSITE" id="PS00223">
    <property type="entry name" value="ANNEXIN_1"/>
    <property type="match status" value="1"/>
</dbReference>
<dbReference type="PROSITE" id="PS51897">
    <property type="entry name" value="ANNEXIN_2"/>
    <property type="match status" value="4"/>
</dbReference>
<sequence length="318" mass="36570">MASLKIPANIPLPEEDSEQLHKAFKGWGTNEGMIISILAHRNATQRSFIRAVYAANYNKDLLKELDGELSGDFERVVMLWTLDPTERDAYLANESTKLFTKNIWVLVEIACTRPSLEFFKTKQAYHVRYKTSLEEDVAYHTSGNIRKLLVPLVSTFRYDGNADEVNVKLARSEAKTLHKKITEKAYTDEDLIRILTTRSKAQINATLNHFKDKFGSSINKFLKEDSNDDYVQLLKTAIKCLTYPEKYFEKVLRRAINRMGTDEWALTRVVTTRAEVDLERIKEEYLRRNSVPLDRAIANDTSGDYKDMLLALLGHDHA</sequence>
<evidence type="ECO:0000250" key="1">
    <source>
        <dbReference type="UniProtKB" id="P93157"/>
    </source>
</evidence>
<evidence type="ECO:0000250" key="2">
    <source>
        <dbReference type="UniProtKB" id="Q9SYT0"/>
    </source>
</evidence>
<evidence type="ECO:0000250" key="3">
    <source>
        <dbReference type="UniProtKB" id="Q9XEE2"/>
    </source>
</evidence>
<evidence type="ECO:0000255" key="4">
    <source>
        <dbReference type="PROSITE-ProRule" id="PRU01245"/>
    </source>
</evidence>
<evidence type="ECO:0000269" key="5">
    <source>
    </source>
</evidence>
<evidence type="ECO:0000269" key="6">
    <source>
    </source>
</evidence>
<evidence type="ECO:0000305" key="7"/>
<protein>
    <recommendedName>
        <fullName>Annexin D6</fullName>
    </recommendedName>
    <alternativeName>
        <fullName>AnnAt6</fullName>
    </alternativeName>
</protein>